<proteinExistence type="evidence at protein level"/>
<name>ES2HA_ODOHO</name>
<feature type="peptide" id="PRO_0000366047" description="Esculentin-2HSa">
    <location>
        <begin position="1"/>
        <end position="37"/>
    </location>
</feature>
<feature type="disulfide bond">
    <location>
        <begin position="31"/>
        <end position="37"/>
    </location>
</feature>
<comment type="function">
    <text evidence="1">Has antibacterial activity against the Gram-positive bacterium S.aureus ATCC 25923 (MIC=32 uM) and the Gram-negative bacterium E.coli ATCC 25726 (MIC=16 uM).</text>
</comment>
<comment type="subcellular location">
    <subcellularLocation>
        <location evidence="1">Secreted</location>
    </subcellularLocation>
</comment>
<comment type="tissue specificity">
    <text evidence="4">Expressed by the skin glands.</text>
</comment>
<comment type="mass spectrometry"/>
<comment type="similarity">
    <text evidence="3">Belongs to the frog skin active peptide (FSAP) family. Esculentin subfamily.</text>
</comment>
<comment type="online information" name="The antimicrobial peptide database">
    <link uri="https://wangapd3.com/database/query_output.php?ID=01420"/>
</comment>
<dbReference type="SMR" id="P0C8T9"/>
<dbReference type="GO" id="GO:0005576">
    <property type="term" value="C:extracellular region"/>
    <property type="evidence" value="ECO:0007669"/>
    <property type="project" value="UniProtKB-SubCell"/>
</dbReference>
<dbReference type="GO" id="GO:0042742">
    <property type="term" value="P:defense response to bacterium"/>
    <property type="evidence" value="ECO:0007669"/>
    <property type="project" value="UniProtKB-KW"/>
</dbReference>
<dbReference type="InterPro" id="IPR012521">
    <property type="entry name" value="Antimicrobial_frog_2"/>
</dbReference>
<dbReference type="Pfam" id="PF08023">
    <property type="entry name" value="Antimicrobial_2"/>
    <property type="match status" value="1"/>
</dbReference>
<accession>P0C8T9</accession>
<organism>
    <name type="scientific">Odorrana hosii</name>
    <name type="common">Hose's rock frog</name>
    <name type="synonym">Rana hosii</name>
    <dbReference type="NCBI Taxonomy" id="310666"/>
    <lineage>
        <taxon>Eukaryota</taxon>
        <taxon>Metazoa</taxon>
        <taxon>Chordata</taxon>
        <taxon>Craniata</taxon>
        <taxon>Vertebrata</taxon>
        <taxon>Euteleostomi</taxon>
        <taxon>Amphibia</taxon>
        <taxon>Batrachia</taxon>
        <taxon>Anura</taxon>
        <taxon>Neobatrachia</taxon>
        <taxon>Ranoidea</taxon>
        <taxon>Ranidae</taxon>
        <taxon>Odorrana</taxon>
    </lineage>
</organism>
<reference key="1">
    <citation type="journal article" date="2008" name="Toxicon">
        <title>Characterization of antimicrobial peptides from the skin secretions of the Malaysian frogs, Odorrana hosii and Hylarana picturata (Anura:Ranidae).</title>
        <authorList>
            <person name="Conlon J.M."/>
            <person name="Kolodziejek J."/>
            <person name="Nowotny N."/>
            <person name="Leprince J."/>
            <person name="Vaudry H."/>
            <person name="Coquet L."/>
            <person name="Jouenne T."/>
            <person name="King J.D."/>
        </authorList>
    </citation>
    <scope>PROTEIN SEQUENCE</scope>
    <scope>FUNCTION</scope>
    <scope>MASS SPECTROMETRY</scope>
    <scope>SUBCELLULAR LOCATION</scope>
    <source>
        <tissue>Skin secretion</tissue>
    </source>
</reference>
<keyword id="KW-0878">Amphibian defense peptide</keyword>
<keyword id="KW-0044">Antibiotic</keyword>
<keyword id="KW-0929">Antimicrobial</keyword>
<keyword id="KW-0903">Direct protein sequencing</keyword>
<keyword id="KW-1015">Disulfide bond</keyword>
<keyword id="KW-0964">Secreted</keyword>
<sequence>GIFSLIKGAAQLIGKTVAKEAGKTGLELMACKVTKQC</sequence>
<protein>
    <recommendedName>
        <fullName evidence="2">Esculentin-2HSa</fullName>
    </recommendedName>
</protein>
<evidence type="ECO:0000269" key="1">
    <source>
    </source>
</evidence>
<evidence type="ECO:0000303" key="2">
    <source>
    </source>
</evidence>
<evidence type="ECO:0000305" key="3"/>
<evidence type="ECO:0000305" key="4">
    <source>
    </source>
</evidence>